<comment type="function">
    <text evidence="1">Represses a number of genes involved in the response to DNA damage (SOS response), including recA and lexA. In the presence of single-stranded DNA, RecA interacts with LexA causing an autocatalytic cleavage which disrupts the DNA-binding part of LexA, leading to derepression of the SOS regulon and eventually DNA repair.</text>
</comment>
<comment type="catalytic activity">
    <reaction evidence="1">
        <text>Hydrolysis of Ala-|-Gly bond in repressor LexA.</text>
        <dbReference type="EC" id="3.4.21.88"/>
    </reaction>
</comment>
<comment type="subunit">
    <text evidence="1">Homodimer.</text>
</comment>
<comment type="similarity">
    <text evidence="1">Belongs to the peptidase S24 family.</text>
</comment>
<reference key="1">
    <citation type="submission" date="2007-08" db="EMBL/GenBank/DDBJ databases">
        <title>Complete sequence of Thermotoga lettingae TMO.</title>
        <authorList>
            <consortium name="US DOE Joint Genome Institute"/>
            <person name="Copeland A."/>
            <person name="Lucas S."/>
            <person name="Lapidus A."/>
            <person name="Barry K."/>
            <person name="Glavina del Rio T."/>
            <person name="Dalin E."/>
            <person name="Tice H."/>
            <person name="Pitluck S."/>
            <person name="Foster B."/>
            <person name="Bruce D."/>
            <person name="Schmutz J."/>
            <person name="Larimer F."/>
            <person name="Land M."/>
            <person name="Hauser L."/>
            <person name="Kyrpides N."/>
            <person name="Mikhailova N."/>
            <person name="Nelson K."/>
            <person name="Gogarten J.P."/>
            <person name="Noll K."/>
            <person name="Richardson P."/>
        </authorList>
    </citation>
    <scope>NUCLEOTIDE SEQUENCE [LARGE SCALE GENOMIC DNA]</scope>
    <source>
        <strain>ATCC BAA-301 / DSM 14385 / NBRC 107922 / TMO</strain>
    </source>
</reference>
<proteinExistence type="inferred from homology"/>
<accession>A8F429</accession>
<keyword id="KW-0068">Autocatalytic cleavage</keyword>
<keyword id="KW-0227">DNA damage</keyword>
<keyword id="KW-0234">DNA repair</keyword>
<keyword id="KW-0235">DNA replication</keyword>
<keyword id="KW-0238">DNA-binding</keyword>
<keyword id="KW-0378">Hydrolase</keyword>
<keyword id="KW-1185">Reference proteome</keyword>
<keyword id="KW-0678">Repressor</keyword>
<keyword id="KW-0742">SOS response</keyword>
<keyword id="KW-0804">Transcription</keyword>
<keyword id="KW-0805">Transcription regulation</keyword>
<name>LEXA_PSELT</name>
<sequence>MKKELTDRQKKILDFVLSYIDSHGYPPSIRDIARAFRITPRGAIVHLNALEKKGYLTRGKRARSIKVLNRSEAIRLPVVGTIAAGNAIEAIENPTEIIEVPKAMIKIGFDHFLLRVRGESMIEEHILDKDYVVIRKQNTANNGDIVAVLTNSNEATLKKIYIEPEKIILKPANSKMQPIELKPENVKILGKMVGVIRIYG</sequence>
<protein>
    <recommendedName>
        <fullName evidence="1">LexA repressor</fullName>
        <ecNumber evidence="1">3.4.21.88</ecNumber>
    </recommendedName>
</protein>
<evidence type="ECO:0000255" key="1">
    <source>
        <dbReference type="HAMAP-Rule" id="MF_00015"/>
    </source>
</evidence>
<organism>
    <name type="scientific">Pseudothermotoga lettingae (strain ATCC BAA-301 / DSM 14385 / NBRC 107922 / TMO)</name>
    <name type="common">Thermotoga lettingae</name>
    <dbReference type="NCBI Taxonomy" id="416591"/>
    <lineage>
        <taxon>Bacteria</taxon>
        <taxon>Thermotogati</taxon>
        <taxon>Thermotogota</taxon>
        <taxon>Thermotogae</taxon>
        <taxon>Thermotogales</taxon>
        <taxon>Thermotogaceae</taxon>
        <taxon>Pseudothermotoga</taxon>
    </lineage>
</organism>
<gene>
    <name evidence="1" type="primary">lexA</name>
    <name type="ordered locus">Tlet_0345</name>
</gene>
<feature type="chain" id="PRO_0000322770" description="LexA repressor">
    <location>
        <begin position="1"/>
        <end position="200"/>
    </location>
</feature>
<feature type="DNA-binding region" description="H-T-H motif" evidence="1">
    <location>
        <begin position="29"/>
        <end position="48"/>
    </location>
</feature>
<feature type="active site" description="For autocatalytic cleavage activity" evidence="1">
    <location>
        <position position="120"/>
    </location>
</feature>
<feature type="active site" description="For autocatalytic cleavage activity" evidence="1">
    <location>
        <position position="158"/>
    </location>
</feature>
<feature type="site" description="Cleavage; by autolysis" evidence="1">
    <location>
        <begin position="84"/>
        <end position="85"/>
    </location>
</feature>
<dbReference type="EC" id="3.4.21.88" evidence="1"/>
<dbReference type="EMBL" id="CP000812">
    <property type="protein sequence ID" value="ABV32913.1"/>
    <property type="molecule type" value="Genomic_DNA"/>
</dbReference>
<dbReference type="RefSeq" id="WP_012002394.1">
    <property type="nucleotide sequence ID" value="NZ_BSDV01000001.1"/>
</dbReference>
<dbReference type="SMR" id="A8F429"/>
<dbReference type="STRING" id="416591.Tlet_0345"/>
<dbReference type="MEROPS" id="S24.001"/>
<dbReference type="KEGG" id="tle:Tlet_0345"/>
<dbReference type="eggNOG" id="COG1974">
    <property type="taxonomic scope" value="Bacteria"/>
</dbReference>
<dbReference type="HOGENOM" id="CLU_066192_45_1_0"/>
<dbReference type="OrthoDB" id="9802364at2"/>
<dbReference type="Proteomes" id="UP000002016">
    <property type="component" value="Chromosome"/>
</dbReference>
<dbReference type="GO" id="GO:0003677">
    <property type="term" value="F:DNA binding"/>
    <property type="evidence" value="ECO:0007669"/>
    <property type="project" value="UniProtKB-UniRule"/>
</dbReference>
<dbReference type="GO" id="GO:0004252">
    <property type="term" value="F:serine-type endopeptidase activity"/>
    <property type="evidence" value="ECO:0007669"/>
    <property type="project" value="UniProtKB-UniRule"/>
</dbReference>
<dbReference type="GO" id="GO:0006281">
    <property type="term" value="P:DNA repair"/>
    <property type="evidence" value="ECO:0007669"/>
    <property type="project" value="UniProtKB-UniRule"/>
</dbReference>
<dbReference type="GO" id="GO:0006260">
    <property type="term" value="P:DNA replication"/>
    <property type="evidence" value="ECO:0007669"/>
    <property type="project" value="UniProtKB-UniRule"/>
</dbReference>
<dbReference type="GO" id="GO:0045892">
    <property type="term" value="P:negative regulation of DNA-templated transcription"/>
    <property type="evidence" value="ECO:0007669"/>
    <property type="project" value="UniProtKB-UniRule"/>
</dbReference>
<dbReference type="GO" id="GO:0006508">
    <property type="term" value="P:proteolysis"/>
    <property type="evidence" value="ECO:0007669"/>
    <property type="project" value="InterPro"/>
</dbReference>
<dbReference type="GO" id="GO:0009432">
    <property type="term" value="P:SOS response"/>
    <property type="evidence" value="ECO:0007669"/>
    <property type="project" value="UniProtKB-UniRule"/>
</dbReference>
<dbReference type="CDD" id="cd06529">
    <property type="entry name" value="S24_LexA-like"/>
    <property type="match status" value="1"/>
</dbReference>
<dbReference type="FunFam" id="2.10.109.10:FF:000001">
    <property type="entry name" value="LexA repressor"/>
    <property type="match status" value="1"/>
</dbReference>
<dbReference type="Gene3D" id="2.10.109.10">
    <property type="entry name" value="Umud Fragment, subunit A"/>
    <property type="match status" value="1"/>
</dbReference>
<dbReference type="Gene3D" id="1.10.10.10">
    <property type="entry name" value="Winged helix-like DNA-binding domain superfamily/Winged helix DNA-binding domain"/>
    <property type="match status" value="1"/>
</dbReference>
<dbReference type="HAMAP" id="MF_00015">
    <property type="entry name" value="LexA"/>
    <property type="match status" value="1"/>
</dbReference>
<dbReference type="InterPro" id="IPR006200">
    <property type="entry name" value="LexA"/>
</dbReference>
<dbReference type="InterPro" id="IPR039418">
    <property type="entry name" value="LexA-like"/>
</dbReference>
<dbReference type="InterPro" id="IPR036286">
    <property type="entry name" value="LexA/Signal_pep-like_sf"/>
</dbReference>
<dbReference type="InterPro" id="IPR006199">
    <property type="entry name" value="LexA_DNA-bd_dom"/>
</dbReference>
<dbReference type="InterPro" id="IPR050077">
    <property type="entry name" value="LexA_repressor"/>
</dbReference>
<dbReference type="InterPro" id="IPR006197">
    <property type="entry name" value="Peptidase_S24_LexA"/>
</dbReference>
<dbReference type="InterPro" id="IPR015927">
    <property type="entry name" value="Peptidase_S24_S26A/B/C"/>
</dbReference>
<dbReference type="InterPro" id="IPR036388">
    <property type="entry name" value="WH-like_DNA-bd_sf"/>
</dbReference>
<dbReference type="InterPro" id="IPR036390">
    <property type="entry name" value="WH_DNA-bd_sf"/>
</dbReference>
<dbReference type="NCBIfam" id="TIGR00498">
    <property type="entry name" value="lexA"/>
    <property type="match status" value="1"/>
</dbReference>
<dbReference type="PANTHER" id="PTHR33516">
    <property type="entry name" value="LEXA REPRESSOR"/>
    <property type="match status" value="1"/>
</dbReference>
<dbReference type="PANTHER" id="PTHR33516:SF2">
    <property type="entry name" value="LEXA REPRESSOR-RELATED"/>
    <property type="match status" value="1"/>
</dbReference>
<dbReference type="Pfam" id="PF01726">
    <property type="entry name" value="LexA_DNA_bind"/>
    <property type="match status" value="1"/>
</dbReference>
<dbReference type="Pfam" id="PF00717">
    <property type="entry name" value="Peptidase_S24"/>
    <property type="match status" value="1"/>
</dbReference>
<dbReference type="PRINTS" id="PR00726">
    <property type="entry name" value="LEXASERPTASE"/>
</dbReference>
<dbReference type="SUPFAM" id="SSF51306">
    <property type="entry name" value="LexA/Signal peptidase"/>
    <property type="match status" value="1"/>
</dbReference>
<dbReference type="SUPFAM" id="SSF46785">
    <property type="entry name" value="Winged helix' DNA-binding domain"/>
    <property type="match status" value="1"/>
</dbReference>